<sequence length="346" mass="36704">MKTGRGVGPTDAAGGPARHLPVMLAEVLAHLAPKDAGTCLDGTFGAGGYTRAILEAANGRVIAIDRDPTAIAGGQALVEETGGRLTLVHERFSHLDQVAQDLGAAPLDGVVLDIGVSSMQLDEADRGFSFRRDGPLDMRMANDGPSAADLVADLDEVELAHVIWTLGEERFSRQIARAIVNARAESPITRTTQLADIVSKVVWAKPGEMHPATRTFQALRIAVNEELQELVGALAAAERVLKPGGRLVVVTFHSLEDRIVKNFLSHRSKAPSASRHMPQAEGPAPSFRLVAKGAVEPGSDEVAGNPRARSAKLRAAERTDAPAHPDGDLAGLLPADLSQRRGRRRS</sequence>
<accession>A8HZ68</accession>
<name>RSMH_AZOC5</name>
<proteinExistence type="inferred from homology"/>
<gene>
    <name evidence="1" type="primary">rsmH</name>
    <name type="synonym">mraW</name>
    <name type="ordered locus">AZC_4546</name>
</gene>
<dbReference type="EC" id="2.1.1.199" evidence="1"/>
<dbReference type="EMBL" id="AP009384">
    <property type="protein sequence ID" value="BAF90544.1"/>
    <property type="molecule type" value="Genomic_DNA"/>
</dbReference>
<dbReference type="RefSeq" id="WP_012173065.1">
    <property type="nucleotide sequence ID" value="NC_009937.1"/>
</dbReference>
<dbReference type="SMR" id="A8HZ68"/>
<dbReference type="STRING" id="438753.AZC_4546"/>
<dbReference type="KEGG" id="azc:AZC_4546"/>
<dbReference type="eggNOG" id="COG0275">
    <property type="taxonomic scope" value="Bacteria"/>
</dbReference>
<dbReference type="HOGENOM" id="CLU_038422_1_1_5"/>
<dbReference type="Proteomes" id="UP000000270">
    <property type="component" value="Chromosome"/>
</dbReference>
<dbReference type="GO" id="GO:0005737">
    <property type="term" value="C:cytoplasm"/>
    <property type="evidence" value="ECO:0007669"/>
    <property type="project" value="UniProtKB-SubCell"/>
</dbReference>
<dbReference type="GO" id="GO:0071424">
    <property type="term" value="F:rRNA (cytosine-N4-)-methyltransferase activity"/>
    <property type="evidence" value="ECO:0007669"/>
    <property type="project" value="UniProtKB-UniRule"/>
</dbReference>
<dbReference type="GO" id="GO:0070475">
    <property type="term" value="P:rRNA base methylation"/>
    <property type="evidence" value="ECO:0007669"/>
    <property type="project" value="UniProtKB-UniRule"/>
</dbReference>
<dbReference type="FunFam" id="1.10.150.170:FF:000003">
    <property type="entry name" value="Ribosomal RNA small subunit methyltransferase H"/>
    <property type="match status" value="1"/>
</dbReference>
<dbReference type="Gene3D" id="1.10.150.170">
    <property type="entry name" value="Putative methyltransferase TM0872, insert domain"/>
    <property type="match status" value="1"/>
</dbReference>
<dbReference type="Gene3D" id="3.40.50.150">
    <property type="entry name" value="Vaccinia Virus protein VP39"/>
    <property type="match status" value="1"/>
</dbReference>
<dbReference type="HAMAP" id="MF_01007">
    <property type="entry name" value="16SrRNA_methyltr_H"/>
    <property type="match status" value="1"/>
</dbReference>
<dbReference type="InterPro" id="IPR002903">
    <property type="entry name" value="RsmH"/>
</dbReference>
<dbReference type="InterPro" id="IPR023397">
    <property type="entry name" value="SAM-dep_MeTrfase_MraW_recog"/>
</dbReference>
<dbReference type="InterPro" id="IPR029063">
    <property type="entry name" value="SAM-dependent_MTases_sf"/>
</dbReference>
<dbReference type="NCBIfam" id="TIGR00006">
    <property type="entry name" value="16S rRNA (cytosine(1402)-N(4))-methyltransferase RsmH"/>
    <property type="match status" value="1"/>
</dbReference>
<dbReference type="PANTHER" id="PTHR11265:SF0">
    <property type="entry name" value="12S RRNA N4-METHYLCYTIDINE METHYLTRANSFERASE"/>
    <property type="match status" value="1"/>
</dbReference>
<dbReference type="PANTHER" id="PTHR11265">
    <property type="entry name" value="S-ADENOSYL-METHYLTRANSFERASE MRAW"/>
    <property type="match status" value="1"/>
</dbReference>
<dbReference type="Pfam" id="PF01795">
    <property type="entry name" value="Methyltransf_5"/>
    <property type="match status" value="1"/>
</dbReference>
<dbReference type="PIRSF" id="PIRSF004486">
    <property type="entry name" value="MraW"/>
    <property type="match status" value="1"/>
</dbReference>
<dbReference type="SUPFAM" id="SSF81799">
    <property type="entry name" value="Putative methyltransferase TM0872, insert domain"/>
    <property type="match status" value="1"/>
</dbReference>
<dbReference type="SUPFAM" id="SSF53335">
    <property type="entry name" value="S-adenosyl-L-methionine-dependent methyltransferases"/>
    <property type="match status" value="1"/>
</dbReference>
<feature type="chain" id="PRO_0000386723" description="Ribosomal RNA small subunit methyltransferase H">
    <location>
        <begin position="1"/>
        <end position="346"/>
    </location>
</feature>
<feature type="region of interest" description="Disordered" evidence="2">
    <location>
        <begin position="294"/>
        <end position="346"/>
    </location>
</feature>
<feature type="compositionally biased region" description="Basic and acidic residues" evidence="2">
    <location>
        <begin position="314"/>
        <end position="327"/>
    </location>
</feature>
<feature type="compositionally biased region" description="Low complexity" evidence="2">
    <location>
        <begin position="328"/>
        <end position="337"/>
    </location>
</feature>
<feature type="binding site" evidence="1">
    <location>
        <begin position="47"/>
        <end position="49"/>
    </location>
    <ligand>
        <name>S-adenosyl-L-methionine</name>
        <dbReference type="ChEBI" id="CHEBI:59789"/>
    </ligand>
</feature>
<feature type="binding site" evidence="1">
    <location>
        <position position="65"/>
    </location>
    <ligand>
        <name>S-adenosyl-L-methionine</name>
        <dbReference type="ChEBI" id="CHEBI:59789"/>
    </ligand>
</feature>
<feature type="binding site" evidence="1">
    <location>
        <position position="92"/>
    </location>
    <ligand>
        <name>S-adenosyl-L-methionine</name>
        <dbReference type="ChEBI" id="CHEBI:59789"/>
    </ligand>
</feature>
<feature type="binding site" evidence="1">
    <location>
        <position position="113"/>
    </location>
    <ligand>
        <name>S-adenosyl-L-methionine</name>
        <dbReference type="ChEBI" id="CHEBI:59789"/>
    </ligand>
</feature>
<feature type="binding site" evidence="1">
    <location>
        <position position="120"/>
    </location>
    <ligand>
        <name>S-adenosyl-L-methionine</name>
        <dbReference type="ChEBI" id="CHEBI:59789"/>
    </ligand>
</feature>
<keyword id="KW-0963">Cytoplasm</keyword>
<keyword id="KW-0489">Methyltransferase</keyword>
<keyword id="KW-1185">Reference proteome</keyword>
<keyword id="KW-0698">rRNA processing</keyword>
<keyword id="KW-0949">S-adenosyl-L-methionine</keyword>
<keyword id="KW-0808">Transferase</keyword>
<evidence type="ECO:0000255" key="1">
    <source>
        <dbReference type="HAMAP-Rule" id="MF_01007"/>
    </source>
</evidence>
<evidence type="ECO:0000256" key="2">
    <source>
        <dbReference type="SAM" id="MobiDB-lite"/>
    </source>
</evidence>
<reference key="1">
    <citation type="submission" date="2007-04" db="EMBL/GenBank/DDBJ databases">
        <title>Complete genome sequence of the nitrogen-fixing bacterium Azorhizobium caulinodans ORS571.</title>
        <authorList>
            <person name="Lee K.B."/>
            <person name="Backer P.D."/>
            <person name="Aono T."/>
            <person name="Liu C.T."/>
            <person name="Suzuki S."/>
            <person name="Suzuki T."/>
            <person name="Kaneko T."/>
            <person name="Yamada M."/>
            <person name="Tabata S."/>
            <person name="Kupfer D.M."/>
            <person name="Najar F.Z."/>
            <person name="Wiley G.B."/>
            <person name="Roe B."/>
            <person name="Binnewies T."/>
            <person name="Ussery D."/>
            <person name="Vereecke D."/>
            <person name="Gevers D."/>
            <person name="Holsters M."/>
            <person name="Oyaizu H."/>
        </authorList>
    </citation>
    <scope>NUCLEOTIDE SEQUENCE [LARGE SCALE GENOMIC DNA]</scope>
    <source>
        <strain>ATCC 43989 / DSM 5975 / JCM 20966 / LMG 6465 / NBRC 14845 / NCIMB 13405 / ORS 571</strain>
    </source>
</reference>
<comment type="function">
    <text evidence="1">Specifically methylates the N4 position of cytidine in position 1402 (C1402) of 16S rRNA.</text>
</comment>
<comment type="catalytic activity">
    <reaction evidence="1">
        <text>cytidine(1402) in 16S rRNA + S-adenosyl-L-methionine = N(4)-methylcytidine(1402) in 16S rRNA + S-adenosyl-L-homocysteine + H(+)</text>
        <dbReference type="Rhea" id="RHEA:42928"/>
        <dbReference type="Rhea" id="RHEA-COMP:10286"/>
        <dbReference type="Rhea" id="RHEA-COMP:10287"/>
        <dbReference type="ChEBI" id="CHEBI:15378"/>
        <dbReference type="ChEBI" id="CHEBI:57856"/>
        <dbReference type="ChEBI" id="CHEBI:59789"/>
        <dbReference type="ChEBI" id="CHEBI:74506"/>
        <dbReference type="ChEBI" id="CHEBI:82748"/>
        <dbReference type="EC" id="2.1.1.199"/>
    </reaction>
</comment>
<comment type="subcellular location">
    <subcellularLocation>
        <location evidence="1">Cytoplasm</location>
    </subcellularLocation>
</comment>
<comment type="similarity">
    <text evidence="1">Belongs to the methyltransferase superfamily. RsmH family.</text>
</comment>
<protein>
    <recommendedName>
        <fullName evidence="1">Ribosomal RNA small subunit methyltransferase H</fullName>
        <ecNumber evidence="1">2.1.1.199</ecNumber>
    </recommendedName>
    <alternativeName>
        <fullName evidence="1">16S rRNA m(4)C1402 methyltransferase</fullName>
    </alternativeName>
    <alternativeName>
        <fullName evidence="1">rRNA (cytosine-N(4)-)-methyltransferase RsmH</fullName>
    </alternativeName>
</protein>
<organism>
    <name type="scientific">Azorhizobium caulinodans (strain ATCC 43989 / DSM 5975 / JCM 20966 / LMG 6465 / NBRC 14845 / NCIMB 13405 / ORS 571)</name>
    <dbReference type="NCBI Taxonomy" id="438753"/>
    <lineage>
        <taxon>Bacteria</taxon>
        <taxon>Pseudomonadati</taxon>
        <taxon>Pseudomonadota</taxon>
        <taxon>Alphaproteobacteria</taxon>
        <taxon>Hyphomicrobiales</taxon>
        <taxon>Xanthobacteraceae</taxon>
        <taxon>Azorhizobium</taxon>
    </lineage>
</organism>